<organism>
    <name type="scientific">Arabidopsis thaliana</name>
    <name type="common">Mouse-ear cress</name>
    <dbReference type="NCBI Taxonomy" id="3702"/>
    <lineage>
        <taxon>Eukaryota</taxon>
        <taxon>Viridiplantae</taxon>
        <taxon>Streptophyta</taxon>
        <taxon>Embryophyta</taxon>
        <taxon>Tracheophyta</taxon>
        <taxon>Spermatophyta</taxon>
        <taxon>Magnoliopsida</taxon>
        <taxon>eudicotyledons</taxon>
        <taxon>Gunneridae</taxon>
        <taxon>Pentapetalae</taxon>
        <taxon>rosids</taxon>
        <taxon>malvids</taxon>
        <taxon>Brassicales</taxon>
        <taxon>Brassicaceae</taxon>
        <taxon>Camelineae</taxon>
        <taxon>Arabidopsis</taxon>
    </lineage>
</organism>
<name>PI5K8_ARATH</name>
<evidence type="ECO:0000250" key="1"/>
<evidence type="ECO:0000255" key="2">
    <source>
        <dbReference type="PROSITE-ProRule" id="PRU00781"/>
    </source>
</evidence>
<evidence type="ECO:0000256" key="3">
    <source>
        <dbReference type="SAM" id="MobiDB-lite"/>
    </source>
</evidence>
<evidence type="ECO:0000305" key="4"/>
<reference key="1">
    <citation type="journal article" date="2000" name="Nature">
        <title>Sequence and analysis of chromosome 1 of the plant Arabidopsis thaliana.</title>
        <authorList>
            <person name="Theologis A."/>
            <person name="Ecker J.R."/>
            <person name="Palm C.J."/>
            <person name="Federspiel N.A."/>
            <person name="Kaul S."/>
            <person name="White O."/>
            <person name="Alonso J."/>
            <person name="Altafi H."/>
            <person name="Araujo R."/>
            <person name="Bowman C.L."/>
            <person name="Brooks S.Y."/>
            <person name="Buehler E."/>
            <person name="Chan A."/>
            <person name="Chao Q."/>
            <person name="Chen H."/>
            <person name="Cheuk R.F."/>
            <person name="Chin C.W."/>
            <person name="Chung M.K."/>
            <person name="Conn L."/>
            <person name="Conway A.B."/>
            <person name="Conway A.R."/>
            <person name="Creasy T.H."/>
            <person name="Dewar K."/>
            <person name="Dunn P."/>
            <person name="Etgu P."/>
            <person name="Feldblyum T.V."/>
            <person name="Feng J.-D."/>
            <person name="Fong B."/>
            <person name="Fujii C.Y."/>
            <person name="Gill J.E."/>
            <person name="Goldsmith A.D."/>
            <person name="Haas B."/>
            <person name="Hansen N.F."/>
            <person name="Hughes B."/>
            <person name="Huizar L."/>
            <person name="Hunter J.L."/>
            <person name="Jenkins J."/>
            <person name="Johnson-Hopson C."/>
            <person name="Khan S."/>
            <person name="Khaykin E."/>
            <person name="Kim C.J."/>
            <person name="Koo H.L."/>
            <person name="Kremenetskaia I."/>
            <person name="Kurtz D.B."/>
            <person name="Kwan A."/>
            <person name="Lam B."/>
            <person name="Langin-Hooper S."/>
            <person name="Lee A."/>
            <person name="Lee J.M."/>
            <person name="Lenz C.A."/>
            <person name="Li J.H."/>
            <person name="Li Y.-P."/>
            <person name="Lin X."/>
            <person name="Liu S.X."/>
            <person name="Liu Z.A."/>
            <person name="Luros J.S."/>
            <person name="Maiti R."/>
            <person name="Marziali A."/>
            <person name="Militscher J."/>
            <person name="Miranda M."/>
            <person name="Nguyen M."/>
            <person name="Nierman W.C."/>
            <person name="Osborne B.I."/>
            <person name="Pai G."/>
            <person name="Peterson J."/>
            <person name="Pham P.K."/>
            <person name="Rizzo M."/>
            <person name="Rooney T."/>
            <person name="Rowley D."/>
            <person name="Sakano H."/>
            <person name="Salzberg S.L."/>
            <person name="Schwartz J.R."/>
            <person name="Shinn P."/>
            <person name="Southwick A.M."/>
            <person name="Sun H."/>
            <person name="Tallon L.J."/>
            <person name="Tambunga G."/>
            <person name="Toriumi M.J."/>
            <person name="Town C.D."/>
            <person name="Utterback T."/>
            <person name="Van Aken S."/>
            <person name="Vaysberg M."/>
            <person name="Vysotskaia V.S."/>
            <person name="Walker M."/>
            <person name="Wu D."/>
            <person name="Yu G."/>
            <person name="Fraser C.M."/>
            <person name="Venter J.C."/>
            <person name="Davis R.W."/>
        </authorList>
    </citation>
    <scope>NUCLEOTIDE SEQUENCE [LARGE SCALE GENOMIC DNA]</scope>
    <source>
        <strain>cv. Columbia</strain>
    </source>
</reference>
<reference key="2">
    <citation type="journal article" date="2017" name="Plant J.">
        <title>Araport11: a complete reannotation of the Arabidopsis thaliana reference genome.</title>
        <authorList>
            <person name="Cheng C.Y."/>
            <person name="Krishnakumar V."/>
            <person name="Chan A.P."/>
            <person name="Thibaud-Nissen F."/>
            <person name="Schobel S."/>
            <person name="Town C.D."/>
        </authorList>
    </citation>
    <scope>GENOME REANNOTATION</scope>
    <source>
        <strain>cv. Columbia</strain>
    </source>
</reference>
<reference key="3">
    <citation type="journal article" date="2003" name="Science">
        <title>Empirical analysis of transcriptional activity in the Arabidopsis genome.</title>
        <authorList>
            <person name="Yamada K."/>
            <person name="Lim J."/>
            <person name="Dale J.M."/>
            <person name="Chen H."/>
            <person name="Shinn P."/>
            <person name="Palm C.J."/>
            <person name="Southwick A.M."/>
            <person name="Wu H.C."/>
            <person name="Kim C.J."/>
            <person name="Nguyen M."/>
            <person name="Pham P.K."/>
            <person name="Cheuk R.F."/>
            <person name="Karlin-Newmann G."/>
            <person name="Liu S.X."/>
            <person name="Lam B."/>
            <person name="Sakano H."/>
            <person name="Wu T."/>
            <person name="Yu G."/>
            <person name="Miranda M."/>
            <person name="Quach H.L."/>
            <person name="Tripp M."/>
            <person name="Chang C.H."/>
            <person name="Lee J.M."/>
            <person name="Toriumi M.J."/>
            <person name="Chan M.M."/>
            <person name="Tang C.C."/>
            <person name="Onodera C.S."/>
            <person name="Deng J.M."/>
            <person name="Akiyama K."/>
            <person name="Ansari Y."/>
            <person name="Arakawa T."/>
            <person name="Banh J."/>
            <person name="Banno F."/>
            <person name="Bowser L."/>
            <person name="Brooks S.Y."/>
            <person name="Carninci P."/>
            <person name="Chao Q."/>
            <person name="Choy N."/>
            <person name="Enju A."/>
            <person name="Goldsmith A.D."/>
            <person name="Gurjal M."/>
            <person name="Hansen N.F."/>
            <person name="Hayashizaki Y."/>
            <person name="Johnson-Hopson C."/>
            <person name="Hsuan V.W."/>
            <person name="Iida K."/>
            <person name="Karnes M."/>
            <person name="Khan S."/>
            <person name="Koesema E."/>
            <person name="Ishida J."/>
            <person name="Jiang P.X."/>
            <person name="Jones T."/>
            <person name="Kawai J."/>
            <person name="Kamiya A."/>
            <person name="Meyers C."/>
            <person name="Nakajima M."/>
            <person name="Narusaka M."/>
            <person name="Seki M."/>
            <person name="Sakurai T."/>
            <person name="Satou M."/>
            <person name="Tamse R."/>
            <person name="Vaysberg M."/>
            <person name="Wallender E.K."/>
            <person name="Wong C."/>
            <person name="Yamamura Y."/>
            <person name="Yuan S."/>
            <person name="Shinozaki K."/>
            <person name="Davis R.W."/>
            <person name="Theologis A."/>
            <person name="Ecker J.R."/>
        </authorList>
    </citation>
    <scope>NUCLEOTIDE SEQUENCE [LARGE SCALE MRNA]</scope>
    <source>
        <strain>cv. Columbia</strain>
    </source>
</reference>
<reference key="4">
    <citation type="journal article" date="2002" name="Plant Physiol.">
        <title>Inositol phospholipid metabolism in Arabidopsis. Characterized and putative isoforms of inositol phospholipid kinase and phosphoinositide-specific phospholipase C.</title>
        <authorList>
            <person name="Mueller-Roeber B."/>
            <person name="Pical C."/>
        </authorList>
    </citation>
    <scope>GENE FAMILY</scope>
    <scope>NOMENCLATURE</scope>
</reference>
<reference key="5">
    <citation type="journal article" date="2009" name="Plant Physiol.">
        <title>Large-scale Arabidopsis phosphoproteome profiling reveals novel chloroplast kinase substrates and phosphorylation networks.</title>
        <authorList>
            <person name="Reiland S."/>
            <person name="Messerli G."/>
            <person name="Baerenfaller K."/>
            <person name="Gerrits B."/>
            <person name="Endler A."/>
            <person name="Grossmann J."/>
            <person name="Gruissem W."/>
            <person name="Baginsky S."/>
        </authorList>
    </citation>
    <scope>IDENTIFICATION BY MASS SPECTROMETRY [LARGE SCALE ANALYSIS]</scope>
</reference>
<comment type="catalytic activity">
    <reaction>
        <text>a 1,2-diacyl-sn-glycero-3-phospho-(1D-myo-inositol 4-phosphate) + ATP = a 1,2-diacyl-sn-glycero-3-phospho-(1D-myo-inositol-4,5-bisphosphate) + ADP + H(+)</text>
        <dbReference type="Rhea" id="RHEA:14425"/>
        <dbReference type="ChEBI" id="CHEBI:15378"/>
        <dbReference type="ChEBI" id="CHEBI:30616"/>
        <dbReference type="ChEBI" id="CHEBI:58178"/>
        <dbReference type="ChEBI" id="CHEBI:58456"/>
        <dbReference type="ChEBI" id="CHEBI:456216"/>
        <dbReference type="EC" id="2.7.1.68"/>
    </reaction>
</comment>
<comment type="alternative products">
    <event type="alternative splicing"/>
    <isoform>
        <id>Q8RY89-1</id>
        <name>1</name>
        <sequence type="displayed"/>
    </isoform>
    <text>A number of isoforms are produced. According to EST sequences.</text>
</comment>
<comment type="sequence caution" evidence="4">
    <conflict type="erroneous gene model prediction">
        <sequence resource="EMBL-CDS" id="AAG51639"/>
    </conflict>
</comment>
<accession>Q8RY89</accession>
<accession>Q9C962</accession>
<proteinExistence type="evidence at protein level"/>
<feature type="chain" id="PRO_0000185480" description="Phosphatidylinositol 4-phosphate 5-kinase 8">
    <location>
        <begin position="1"/>
        <end position="769"/>
    </location>
</feature>
<feature type="repeat" description="MORN 1">
    <location>
        <begin position="16"/>
        <end position="38"/>
    </location>
</feature>
<feature type="repeat" description="MORN 2">
    <location>
        <begin position="39"/>
        <end position="61"/>
    </location>
</feature>
<feature type="repeat" description="MORN 3">
    <location>
        <begin position="62"/>
        <end position="84"/>
    </location>
</feature>
<feature type="repeat" description="MORN 4">
    <location>
        <begin position="85"/>
        <end position="107"/>
    </location>
</feature>
<feature type="repeat" description="MORN 5">
    <location>
        <begin position="108"/>
        <end position="130"/>
    </location>
</feature>
<feature type="repeat" description="MORN 6">
    <location>
        <begin position="131"/>
        <end position="153"/>
    </location>
</feature>
<feature type="repeat" description="MORN 7">
    <location>
        <begin position="154"/>
        <end position="176"/>
    </location>
</feature>
<feature type="repeat" description="MORN 8">
    <location>
        <begin position="177"/>
        <end position="198"/>
    </location>
</feature>
<feature type="domain" description="PIPK" evidence="2">
    <location>
        <begin position="344"/>
        <end position="765"/>
    </location>
</feature>
<feature type="region of interest" description="Disordered" evidence="3">
    <location>
        <begin position="266"/>
        <end position="289"/>
    </location>
</feature>
<feature type="region of interest" description="Activation loop" evidence="1">
    <location>
        <begin position="725"/>
        <end position="746"/>
    </location>
</feature>
<feature type="compositionally biased region" description="Polar residues" evidence="3">
    <location>
        <begin position="276"/>
        <end position="288"/>
    </location>
</feature>
<keyword id="KW-0025">Alternative splicing</keyword>
<keyword id="KW-0067">ATP-binding</keyword>
<keyword id="KW-0418">Kinase</keyword>
<keyword id="KW-0547">Nucleotide-binding</keyword>
<keyword id="KW-1185">Reference proteome</keyword>
<keyword id="KW-0677">Repeat</keyword>
<keyword id="KW-0808">Transferase</keyword>
<sequence length="769" mass="87403">METRPAERVFSNGDVYSGQLKGTLPHGKGKYAWPDGIIYEGDWEEGKISGRGKLMWSSGAKYEGDFSGGYLHGFGTLTSPDGSVYAGAWRMNVRHGLGRKEYCNSDVYDGSWREGLQDGSGSYSWYNGNRFIGNWKKGKMSGRGVMSWANGDLFNGFWLNGLRHGSGVYKYADGGFYFGTWSRGLKDGSGVFYPAGSKHPSLKKWHRHFGYDDTGNFLLSHNSTINIDDLRTSKAVSRSLSELTTTSGLTRTSERYPDDYWSTSDPPRDFMHHGPSSKSARSVDSGQSEIRDKNPIVFEREYMQGVLIKERIMSSIDMSHRARPLNLTKEVTVSACVSFLGGKWNHYLMLNLQLGIRYTVGKITPVPPREVRASDFSERARIMMFFPRNGSQYTPPHKSIDFDWKDYCPMVFRNLREMFKLDAADYMMSICGDDGLREISSPGKSGSIFYLSHDDRFVIKTLKRSELKVLLRMLPRYYEHVGDYENTLITKFFGVHRIKLKWGKKVRFVVMGNMFCTELKIHRRYDLKGSTQGRYTEKNKIGEKTTLKDLDLAYEFHMDKLLREALFKQIILDCSFLESLQILDYSLLLGLHFRAPDPLTDILEPPNEMSDQESDSVGSVDVNLPREPSIPPKGLLMVTHEPNSVNTAPGPHIRGSTLRAFSVGEKEVDLILPGTARLRVQLGVNMPAQAHHKLGQDNEESGTVELFEVYDVVVYMGIIDILQEYNMKKKVEHTCKSMKYDPMTISAIEPTLYSKRFIDFLLKVFPEKA</sequence>
<gene>
    <name type="primary">PIP5K8</name>
    <name type="ordered locus">At1g60890</name>
    <name type="ORF">T7P1.4</name>
</gene>
<protein>
    <recommendedName>
        <fullName>Phosphatidylinositol 4-phosphate 5-kinase 8</fullName>
        <shortName>AtPIP5K8</shortName>
        <ecNumber>2.7.1.68</ecNumber>
    </recommendedName>
    <alternativeName>
        <fullName>1-phosphatidylinositol 4-phosphate kinase 8</fullName>
    </alternativeName>
    <alternativeName>
        <fullName>Diphosphoinositide kinase 8</fullName>
    </alternativeName>
    <alternativeName>
        <fullName>PtdIns(4)P-5-kinase 8</fullName>
    </alternativeName>
</protein>
<dbReference type="EC" id="2.7.1.68"/>
<dbReference type="EMBL" id="AC018908">
    <property type="protein sequence ID" value="AAG51639.1"/>
    <property type="status" value="ALT_SEQ"/>
    <property type="molecule type" value="Genomic_DNA"/>
</dbReference>
<dbReference type="EMBL" id="CP002684">
    <property type="protein sequence ID" value="AEE33744.1"/>
    <property type="molecule type" value="Genomic_DNA"/>
</dbReference>
<dbReference type="EMBL" id="AY074507">
    <property type="protein sequence ID" value="AAL69491.1"/>
    <property type="molecule type" value="mRNA"/>
</dbReference>
<dbReference type="EMBL" id="AY133824">
    <property type="protein sequence ID" value="AAM91758.1"/>
    <property type="molecule type" value="mRNA"/>
</dbReference>
<dbReference type="PIR" id="D96634">
    <property type="entry name" value="D96634"/>
</dbReference>
<dbReference type="RefSeq" id="NP_176286.2">
    <molecule id="Q8RY89-1"/>
    <property type="nucleotide sequence ID" value="NM_104770.5"/>
</dbReference>
<dbReference type="SMR" id="Q8RY89"/>
<dbReference type="BioGRID" id="27605">
    <property type="interactions" value="1"/>
</dbReference>
<dbReference type="FunCoup" id="Q8RY89">
    <property type="interactions" value="2750"/>
</dbReference>
<dbReference type="STRING" id="3702.Q8RY89"/>
<dbReference type="iPTMnet" id="Q8RY89"/>
<dbReference type="PaxDb" id="3702-AT1G60890.2"/>
<dbReference type="ProteomicsDB" id="234956">
    <molecule id="Q8RY89-1"/>
</dbReference>
<dbReference type="EnsemblPlants" id="AT1G60890.1">
    <molecule id="Q8RY89-1"/>
    <property type="protein sequence ID" value="AT1G60890.1"/>
    <property type="gene ID" value="AT1G60890"/>
</dbReference>
<dbReference type="GeneID" id="842381"/>
<dbReference type="Gramene" id="AT1G60890.1">
    <molecule id="Q8RY89-1"/>
    <property type="protein sequence ID" value="AT1G60890.1"/>
    <property type="gene ID" value="AT1G60890"/>
</dbReference>
<dbReference type="KEGG" id="ath:AT1G60890"/>
<dbReference type="Araport" id="AT1G60890"/>
<dbReference type="TAIR" id="AT1G60890"/>
<dbReference type="eggNOG" id="KOG0229">
    <property type="taxonomic scope" value="Eukaryota"/>
</dbReference>
<dbReference type="HOGENOM" id="CLU_004312_6_4_1"/>
<dbReference type="InParanoid" id="Q8RY89"/>
<dbReference type="OMA" id="CSINFYW"/>
<dbReference type="OrthoDB" id="70770at2759"/>
<dbReference type="PhylomeDB" id="Q8RY89"/>
<dbReference type="BioCyc" id="ARA:AT1G60890-MONOMER"/>
<dbReference type="PRO" id="PR:Q8RY89"/>
<dbReference type="Proteomes" id="UP000006548">
    <property type="component" value="Chromosome 1"/>
</dbReference>
<dbReference type="ExpressionAtlas" id="Q8RY89">
    <property type="expression patterns" value="baseline and differential"/>
</dbReference>
<dbReference type="GO" id="GO:0016020">
    <property type="term" value="C:membrane"/>
    <property type="evidence" value="ECO:0007669"/>
    <property type="project" value="UniProtKB-ARBA"/>
</dbReference>
<dbReference type="GO" id="GO:0016308">
    <property type="term" value="F:1-phosphatidylinositol-4-phosphate 5-kinase activity"/>
    <property type="evidence" value="ECO:0007669"/>
    <property type="project" value="UniProtKB-EC"/>
</dbReference>
<dbReference type="GO" id="GO:0005524">
    <property type="term" value="F:ATP binding"/>
    <property type="evidence" value="ECO:0007669"/>
    <property type="project" value="UniProtKB-KW"/>
</dbReference>
<dbReference type="GO" id="GO:0046488">
    <property type="term" value="P:phosphatidylinositol metabolic process"/>
    <property type="evidence" value="ECO:0007669"/>
    <property type="project" value="InterPro"/>
</dbReference>
<dbReference type="CDD" id="cd17302">
    <property type="entry name" value="PIPKc_AtPIP5K_like"/>
    <property type="match status" value="1"/>
</dbReference>
<dbReference type="FunFam" id="3.30.800.10:FF:000003">
    <property type="entry name" value="Phosphatidylinositol 4-phosphate 5-kinase"/>
    <property type="match status" value="1"/>
</dbReference>
<dbReference type="Gene3D" id="3.30.810.10">
    <property type="entry name" value="2-Layer Sandwich"/>
    <property type="match status" value="1"/>
</dbReference>
<dbReference type="Gene3D" id="2.20.110.10">
    <property type="entry name" value="Histone H3 K4-specific methyltransferase SET7/9 N-terminal domain"/>
    <property type="match status" value="3"/>
</dbReference>
<dbReference type="Gene3D" id="3.30.800.10">
    <property type="entry name" value="Phosphatidylinositol Phosphate Kinase II Beta"/>
    <property type="match status" value="1"/>
</dbReference>
<dbReference type="InterPro" id="IPR003409">
    <property type="entry name" value="MORN"/>
</dbReference>
<dbReference type="InterPro" id="IPR017163">
    <property type="entry name" value="PIno-4-P-5_kinase_pln"/>
</dbReference>
<dbReference type="InterPro" id="IPR027483">
    <property type="entry name" value="PInositol-4-P-4/5-kinase_C_sf"/>
</dbReference>
<dbReference type="InterPro" id="IPR002498">
    <property type="entry name" value="PInositol-4-P-4/5-kinase_core"/>
</dbReference>
<dbReference type="InterPro" id="IPR027484">
    <property type="entry name" value="PInositol-4-P-5-kinase_N"/>
</dbReference>
<dbReference type="InterPro" id="IPR023610">
    <property type="entry name" value="PInositol-4/5-P-5/4-kinase"/>
</dbReference>
<dbReference type="PANTHER" id="PTHR23086:SF25">
    <property type="entry name" value="PHOSPHATIDYLINOSITOL 4-PHOSPHATE 5-KINASE 8"/>
    <property type="match status" value="1"/>
</dbReference>
<dbReference type="PANTHER" id="PTHR23086">
    <property type="entry name" value="PHOSPHATIDYLINOSITOL-4-PHOSPHATE 5-KINASE"/>
    <property type="match status" value="1"/>
</dbReference>
<dbReference type="Pfam" id="PF02493">
    <property type="entry name" value="MORN"/>
    <property type="match status" value="8"/>
</dbReference>
<dbReference type="Pfam" id="PF01504">
    <property type="entry name" value="PIP5K"/>
    <property type="match status" value="1"/>
</dbReference>
<dbReference type="PIRSF" id="PIRSF037274">
    <property type="entry name" value="PIP5K_plant_prd"/>
    <property type="match status" value="1"/>
</dbReference>
<dbReference type="SMART" id="SM00698">
    <property type="entry name" value="MORN"/>
    <property type="match status" value="8"/>
</dbReference>
<dbReference type="SMART" id="SM00330">
    <property type="entry name" value="PIPKc"/>
    <property type="match status" value="1"/>
</dbReference>
<dbReference type="SUPFAM" id="SSF82185">
    <property type="entry name" value="Histone H3 K4-specific methyltransferase SET7/9 N-terminal domain"/>
    <property type="match status" value="1"/>
</dbReference>
<dbReference type="SUPFAM" id="SSF56104">
    <property type="entry name" value="SAICAR synthase-like"/>
    <property type="match status" value="1"/>
</dbReference>
<dbReference type="PROSITE" id="PS51455">
    <property type="entry name" value="PIPK"/>
    <property type="match status" value="1"/>
</dbReference>